<organism>
    <name type="scientific">Escherichia coli (strain UTI89 / UPEC)</name>
    <dbReference type="NCBI Taxonomy" id="364106"/>
    <lineage>
        <taxon>Bacteria</taxon>
        <taxon>Pseudomonadati</taxon>
        <taxon>Pseudomonadota</taxon>
        <taxon>Gammaproteobacteria</taxon>
        <taxon>Enterobacterales</taxon>
        <taxon>Enterobacteriaceae</taxon>
        <taxon>Escherichia</taxon>
    </lineage>
</organism>
<protein>
    <recommendedName>
        <fullName evidence="1">DNA-directed RNA polymerase subunit alpha</fullName>
        <shortName evidence="1">RNAP subunit alpha</shortName>
        <ecNumber evidence="1">2.7.7.6</ecNumber>
    </recommendedName>
    <alternativeName>
        <fullName evidence="1">RNA polymerase subunit alpha</fullName>
    </alternativeName>
    <alternativeName>
        <fullName evidence="1">Transcriptase subunit alpha</fullName>
    </alternativeName>
</protein>
<feature type="chain" id="PRO_0000264499" description="DNA-directed RNA polymerase subunit alpha">
    <location>
        <begin position="1"/>
        <end position="329"/>
    </location>
</feature>
<feature type="region of interest" description="Alpha N-terminal domain (alpha-NTD)" evidence="1">
    <location>
        <begin position="1"/>
        <end position="235"/>
    </location>
</feature>
<feature type="region of interest" description="Alpha C-terminal domain (alpha-CTD)" evidence="1">
    <location>
        <begin position="249"/>
        <end position="329"/>
    </location>
</feature>
<evidence type="ECO:0000255" key="1">
    <source>
        <dbReference type="HAMAP-Rule" id="MF_00059"/>
    </source>
</evidence>
<comment type="function">
    <text evidence="1">DNA-dependent RNA polymerase catalyzes the transcription of DNA into RNA using the four ribonucleoside triphosphates as substrates.</text>
</comment>
<comment type="catalytic activity">
    <reaction evidence="1">
        <text>RNA(n) + a ribonucleoside 5'-triphosphate = RNA(n+1) + diphosphate</text>
        <dbReference type="Rhea" id="RHEA:21248"/>
        <dbReference type="Rhea" id="RHEA-COMP:14527"/>
        <dbReference type="Rhea" id="RHEA-COMP:17342"/>
        <dbReference type="ChEBI" id="CHEBI:33019"/>
        <dbReference type="ChEBI" id="CHEBI:61557"/>
        <dbReference type="ChEBI" id="CHEBI:140395"/>
        <dbReference type="EC" id="2.7.7.6"/>
    </reaction>
</comment>
<comment type="subunit">
    <text evidence="1">Homodimer. The RNAP catalytic core consists of 2 alpha, 1 beta, 1 beta' and 1 omega subunit. When a sigma factor is associated with the core the holoenzyme is formed, which can initiate transcription.</text>
</comment>
<comment type="domain">
    <text evidence="1">The N-terminal domain is essential for RNAP assembly and basal transcription, whereas the C-terminal domain is involved in interaction with transcriptional regulators and with upstream promoter elements.</text>
</comment>
<comment type="similarity">
    <text evidence="1">Belongs to the RNA polymerase alpha chain family.</text>
</comment>
<proteinExistence type="inferred from homology"/>
<reference key="1">
    <citation type="journal article" date="2006" name="Proc. Natl. Acad. Sci. U.S.A.">
        <title>Identification of genes subject to positive selection in uropathogenic strains of Escherichia coli: a comparative genomics approach.</title>
        <authorList>
            <person name="Chen S.L."/>
            <person name="Hung C.-S."/>
            <person name="Xu J."/>
            <person name="Reigstad C.S."/>
            <person name="Magrini V."/>
            <person name="Sabo A."/>
            <person name="Blasiar D."/>
            <person name="Bieri T."/>
            <person name="Meyer R.R."/>
            <person name="Ozersky P."/>
            <person name="Armstrong J.R."/>
            <person name="Fulton R.S."/>
            <person name="Latreille J.P."/>
            <person name="Spieth J."/>
            <person name="Hooton T.M."/>
            <person name="Mardis E.R."/>
            <person name="Hultgren S.J."/>
            <person name="Gordon J.I."/>
        </authorList>
    </citation>
    <scope>NUCLEOTIDE SEQUENCE [LARGE SCALE GENOMIC DNA]</scope>
    <source>
        <strain>UTI89 / UPEC</strain>
    </source>
</reference>
<dbReference type="EC" id="2.7.7.6" evidence="1"/>
<dbReference type="EMBL" id="CP000243">
    <property type="protein sequence ID" value="ABE09177.1"/>
    <property type="molecule type" value="Genomic_DNA"/>
</dbReference>
<dbReference type="RefSeq" id="WP_001162094.1">
    <property type="nucleotide sequence ID" value="NZ_CP064825.1"/>
</dbReference>
<dbReference type="SMR" id="Q1R637"/>
<dbReference type="GeneID" id="93778692"/>
<dbReference type="KEGG" id="eci:UTI89_C3740"/>
<dbReference type="HOGENOM" id="CLU_053084_0_0_6"/>
<dbReference type="Proteomes" id="UP000001952">
    <property type="component" value="Chromosome"/>
</dbReference>
<dbReference type="GO" id="GO:0005737">
    <property type="term" value="C:cytoplasm"/>
    <property type="evidence" value="ECO:0007669"/>
    <property type="project" value="UniProtKB-ARBA"/>
</dbReference>
<dbReference type="GO" id="GO:0000428">
    <property type="term" value="C:DNA-directed RNA polymerase complex"/>
    <property type="evidence" value="ECO:0007669"/>
    <property type="project" value="UniProtKB-KW"/>
</dbReference>
<dbReference type="GO" id="GO:0003677">
    <property type="term" value="F:DNA binding"/>
    <property type="evidence" value="ECO:0007669"/>
    <property type="project" value="UniProtKB-UniRule"/>
</dbReference>
<dbReference type="GO" id="GO:0003899">
    <property type="term" value="F:DNA-directed RNA polymerase activity"/>
    <property type="evidence" value="ECO:0007669"/>
    <property type="project" value="UniProtKB-UniRule"/>
</dbReference>
<dbReference type="GO" id="GO:0046983">
    <property type="term" value="F:protein dimerization activity"/>
    <property type="evidence" value="ECO:0007669"/>
    <property type="project" value="InterPro"/>
</dbReference>
<dbReference type="GO" id="GO:0006351">
    <property type="term" value="P:DNA-templated transcription"/>
    <property type="evidence" value="ECO:0007669"/>
    <property type="project" value="UniProtKB-UniRule"/>
</dbReference>
<dbReference type="CDD" id="cd06928">
    <property type="entry name" value="RNAP_alpha_NTD"/>
    <property type="match status" value="1"/>
</dbReference>
<dbReference type="FunFam" id="1.10.150.20:FF:000001">
    <property type="entry name" value="DNA-directed RNA polymerase subunit alpha"/>
    <property type="match status" value="1"/>
</dbReference>
<dbReference type="FunFam" id="2.170.120.12:FF:000001">
    <property type="entry name" value="DNA-directed RNA polymerase subunit alpha"/>
    <property type="match status" value="1"/>
</dbReference>
<dbReference type="Gene3D" id="1.10.150.20">
    <property type="entry name" value="5' to 3' exonuclease, C-terminal subdomain"/>
    <property type="match status" value="1"/>
</dbReference>
<dbReference type="Gene3D" id="2.170.120.12">
    <property type="entry name" value="DNA-directed RNA polymerase, insert domain"/>
    <property type="match status" value="1"/>
</dbReference>
<dbReference type="Gene3D" id="3.30.1360.10">
    <property type="entry name" value="RNA polymerase, RBP11-like subunit"/>
    <property type="match status" value="1"/>
</dbReference>
<dbReference type="HAMAP" id="MF_00059">
    <property type="entry name" value="RNApol_bact_RpoA"/>
    <property type="match status" value="1"/>
</dbReference>
<dbReference type="InterPro" id="IPR011262">
    <property type="entry name" value="DNA-dir_RNA_pol_insert"/>
</dbReference>
<dbReference type="InterPro" id="IPR011263">
    <property type="entry name" value="DNA-dir_RNA_pol_RpoA/D/Rpb3"/>
</dbReference>
<dbReference type="InterPro" id="IPR011773">
    <property type="entry name" value="DNA-dir_RpoA"/>
</dbReference>
<dbReference type="InterPro" id="IPR036603">
    <property type="entry name" value="RBP11-like"/>
</dbReference>
<dbReference type="InterPro" id="IPR011260">
    <property type="entry name" value="RNAP_asu_C"/>
</dbReference>
<dbReference type="InterPro" id="IPR036643">
    <property type="entry name" value="RNApol_insert_sf"/>
</dbReference>
<dbReference type="NCBIfam" id="NF003513">
    <property type="entry name" value="PRK05182.1-2"/>
    <property type="match status" value="1"/>
</dbReference>
<dbReference type="NCBIfam" id="NF003519">
    <property type="entry name" value="PRK05182.2-5"/>
    <property type="match status" value="1"/>
</dbReference>
<dbReference type="NCBIfam" id="TIGR02027">
    <property type="entry name" value="rpoA"/>
    <property type="match status" value="1"/>
</dbReference>
<dbReference type="Pfam" id="PF01000">
    <property type="entry name" value="RNA_pol_A_bac"/>
    <property type="match status" value="1"/>
</dbReference>
<dbReference type="Pfam" id="PF03118">
    <property type="entry name" value="RNA_pol_A_CTD"/>
    <property type="match status" value="1"/>
</dbReference>
<dbReference type="Pfam" id="PF01193">
    <property type="entry name" value="RNA_pol_L"/>
    <property type="match status" value="1"/>
</dbReference>
<dbReference type="SMART" id="SM00662">
    <property type="entry name" value="RPOLD"/>
    <property type="match status" value="1"/>
</dbReference>
<dbReference type="SUPFAM" id="SSF47789">
    <property type="entry name" value="C-terminal domain of RNA polymerase alpha subunit"/>
    <property type="match status" value="1"/>
</dbReference>
<dbReference type="SUPFAM" id="SSF56553">
    <property type="entry name" value="Insert subdomain of RNA polymerase alpha subunit"/>
    <property type="match status" value="1"/>
</dbReference>
<dbReference type="SUPFAM" id="SSF55257">
    <property type="entry name" value="RBP11-like subunits of RNA polymerase"/>
    <property type="match status" value="1"/>
</dbReference>
<sequence length="329" mass="36512">MQGSVTEFLKPRLVDIEQVSSTHAKVTLEPLERGFGHTLGNALRRILLSSMPGCAVTEVEIDGVLHEYSTKEGVQEDILEILLNLKGLAVRVQGKDEVILTLNKSGIGPVTAADITHDGDVEIVKPQHVICHLTDENASISMRIKVQRGRGYVPASTRIHSEEDERPIGRLLVDACYSPVERIAYNVEAARVEQRTDLDKLVIEMETNGTIDPEEAIRRAATILAEQLEAFVDLRDVRQPEVKEEKPEFDPILLRPVDDLELTVRSANCLKAEAIHYIGDLVQRTEVELLKTPNLGKKSLTEIKDVLASRGLSLGMRLENWPPASIADE</sequence>
<gene>
    <name evidence="1" type="primary">rpoA</name>
    <name type="ordered locus">UTI89_C3740</name>
</gene>
<name>RPOA_ECOUT</name>
<accession>Q1R637</accession>
<keyword id="KW-0240">DNA-directed RNA polymerase</keyword>
<keyword id="KW-0548">Nucleotidyltransferase</keyword>
<keyword id="KW-0804">Transcription</keyword>
<keyword id="KW-0808">Transferase</keyword>